<accession>Q9GKE8</accession>
<reference key="1">
    <citation type="journal article" date="2002" name="Immunology">
        <title>Molecular cloning and functional characterization of the pig homologue of integrin-associated protein (IAP/CD47).</title>
        <authorList>
            <person name="Shahein Y.E.A."/>
            <person name="de Andres D.F."/>
            <person name="de la Lastra J.M.P."/>
        </authorList>
    </citation>
    <scope>NUCLEOTIDE SEQUENCE [MRNA]</scope>
    <scope>FUNCTION</scope>
    <scope>INTERACTION WITH THBS1 AND FIBRINOGEN</scope>
    <scope>TISSUE SPECIFICITY</scope>
    <scope>SUBCELLULAR LOCATION</scope>
    <source>
        <tissue>Aorta</tissue>
    </source>
</reference>
<evidence type="ECO:0000250" key="1">
    <source>
        <dbReference type="UniProtKB" id="P97829"/>
    </source>
</evidence>
<evidence type="ECO:0000250" key="2">
    <source>
        <dbReference type="UniProtKB" id="Q08722"/>
    </source>
</evidence>
<evidence type="ECO:0000250" key="3">
    <source>
        <dbReference type="UniProtKB" id="Q61735"/>
    </source>
</evidence>
<evidence type="ECO:0000255" key="4"/>
<evidence type="ECO:0000255" key="5">
    <source>
        <dbReference type="PROSITE-ProRule" id="PRU00114"/>
    </source>
</evidence>
<evidence type="ECO:0000269" key="6">
    <source>
    </source>
</evidence>
<evidence type="ECO:0000305" key="7"/>
<comment type="function">
    <text evidence="1 2 3 6">Adhesive protein that mediates cell-to-cell interactions (PubMed:12153520). Acts as a receptor for thrombospondin THBS1 and as modulator of integrin signaling through the activation of heterotrimeric G proteins (PubMed:12153520). Involved in signal transduction, cardiovascular homeostasis, inflammation, apoptosis, angiogenesis, cellular self-renewal, and immunoregulation (By similarity). Plays a role in modulating pulmonary endothelin EDN1 signaling (By similarity). Modulates nitrous oxide (NO) signaling, in response to THBS1, hence playing a role as a pressor agent, supporting blood pressure (By similarity). Plays an important role in memory formation and synaptic plasticity in the hippocampus (By similarity). Receptor for SIRPA, binding to which prevents maturation of immature dendritic cells and inhibits cytokine production by mature dendritic cells. Interaction with SIRPG mediates cell-cell adhesion, enhances superantigen-dependent T-cell-mediated proliferation and costimulates T-cell activation (By similarity). Positively modulates FAS-dependent apoptosis in T-cells, perhaps by enhancing FAS clustering (By similarity). Plays a role in suppressing angiogenesis and may be involved in metabolic dysregulation during normal aging (By similarity). In response to THBS1, negatively modulates wound healing. Inhibits stem cell self-renewal, in response to THBS1, probably by regulation of the stem cell transcription factors POU5F1/OCT4, SOX2, MYC/c-Myc and KLF4 (By similarity). May play a role in membrane transport and/or integrin dependent signal transduction (By similarity). May prevent premature elimination of red blood cells (By similarity).</text>
</comment>
<comment type="subunit">
    <text evidence="2 6">Monomer (By similarity). Interacts with THBS1 (via the C-terminal domain) (By similarity) (PubMed:12153520). Interacts with SIRPA (By similarity). Interacts with FAS/CD95; interaction may be enhanced by functional activation (By similarity). Interacts with SIRPG, UBQLN1 and UBQLN2 (By similarity). May interact with fibrinogen (PubMed:12153520).</text>
</comment>
<comment type="subcellular location">
    <subcellularLocation>
        <location evidence="6">Cell membrane</location>
        <topology evidence="6">Multi-pass membrane protein</topology>
    </subcellularLocation>
</comment>
<comment type="tissue specificity">
    <text evidence="6">Widely expressed, detected in kidney, liver, platelets, thymus, spleen, macrophages, bone marrow and peripheral blood mononuclear cells.</text>
</comment>
<feature type="signal peptide" evidence="4">
    <location>
        <begin position="1"/>
        <end position="18"/>
    </location>
</feature>
<feature type="chain" id="PRO_0000042207" description="Leukocyte surface antigen CD47">
    <location>
        <begin position="19"/>
        <end position="303"/>
    </location>
</feature>
<feature type="topological domain" description="Extracellular" evidence="4">
    <location>
        <begin position="19"/>
        <end position="140"/>
    </location>
</feature>
<feature type="transmembrane region" description="Helical" evidence="4">
    <location>
        <begin position="141"/>
        <end position="161"/>
    </location>
</feature>
<feature type="topological domain" description="Cytoplasmic" evidence="4">
    <location>
        <begin position="162"/>
        <end position="174"/>
    </location>
</feature>
<feature type="transmembrane region" description="Helical" evidence="4">
    <location>
        <begin position="175"/>
        <end position="195"/>
    </location>
</feature>
<feature type="topological domain" description="Extracellular" evidence="4">
    <location>
        <begin position="196"/>
        <end position="209"/>
    </location>
</feature>
<feature type="transmembrane region" description="Helical" evidence="4">
    <location>
        <begin position="210"/>
        <end position="230"/>
    </location>
</feature>
<feature type="topological domain" description="Cytoplasmic" evidence="4">
    <location>
        <begin position="231"/>
        <end position="236"/>
    </location>
</feature>
<feature type="transmembrane region" description="Helical" evidence="4">
    <location>
        <begin position="237"/>
        <end position="257"/>
    </location>
</feature>
<feature type="topological domain" description="Extracellular" evidence="4">
    <location>
        <begin position="258"/>
        <end position="266"/>
    </location>
</feature>
<feature type="transmembrane region" description="Helical" evidence="4">
    <location>
        <begin position="267"/>
        <end position="287"/>
    </location>
</feature>
<feature type="topological domain" description="Cytoplasmic" evidence="4">
    <location>
        <begin position="288"/>
        <end position="303"/>
    </location>
</feature>
<feature type="domain" description="Ig-like V-type">
    <location>
        <begin position="19"/>
        <end position="125"/>
    </location>
</feature>
<feature type="modified residue" description="Pyrrolidone carboxylic acid" evidence="2 7">
    <location>
        <position position="19"/>
    </location>
</feature>
<feature type="modified residue" description="Phosphoserine" evidence="1">
    <location>
        <position position="87"/>
    </location>
</feature>
<feature type="modified residue" description="Phosphoserine" evidence="1">
    <location>
        <position position="89"/>
    </location>
</feature>
<feature type="glycosylation site" description="N-linked (GlcNAc...) asparagine" evidence="4">
    <location>
        <position position="23"/>
    </location>
</feature>
<feature type="glycosylation site" description="N-linked (GlcNAc...) asparagine" evidence="4">
    <location>
        <position position="34"/>
    </location>
</feature>
<feature type="glycosylation site" description="N-linked (GlcNAc...) asparagine" evidence="4">
    <location>
        <position position="50"/>
    </location>
</feature>
<feature type="glycosylation site" description="N-linked (GlcNAc...) asparagine" evidence="4">
    <location>
        <position position="109"/>
    </location>
</feature>
<feature type="disulfide bond" evidence="5">
    <location>
        <begin position="33"/>
        <end position="261"/>
    </location>
</feature>
<feature type="disulfide bond" evidence="5">
    <location>
        <begin position="41"/>
        <end position="112"/>
    </location>
</feature>
<protein>
    <recommendedName>
        <fullName>Leukocyte surface antigen CD47</fullName>
    </recommendedName>
    <alternativeName>
        <fullName>Integrin-associated protein</fullName>
        <shortName>IAP</shortName>
    </alternativeName>
    <cdAntigenName>CD47</cdAntigenName>
</protein>
<dbReference type="EMBL" id="AF270494">
    <property type="protein sequence ID" value="AAG44764.2"/>
    <property type="molecule type" value="mRNA"/>
</dbReference>
<dbReference type="EMBL" id="AF332698">
    <property type="protein sequence ID" value="AAK15531.1"/>
    <property type="molecule type" value="mRNA"/>
</dbReference>
<dbReference type="RefSeq" id="NP_999147.1">
    <property type="nucleotide sequence ID" value="NM_213982.1"/>
</dbReference>
<dbReference type="SMR" id="Q9GKE8"/>
<dbReference type="FunCoup" id="Q9GKE8">
    <property type="interactions" value="321"/>
</dbReference>
<dbReference type="STRING" id="9823.ENSSSCP00000065885"/>
<dbReference type="GlyCosmos" id="Q9GKE8">
    <property type="glycosylation" value="4 sites, No reported glycans"/>
</dbReference>
<dbReference type="GlyGen" id="Q9GKE8">
    <property type="glycosylation" value="4 sites"/>
</dbReference>
<dbReference type="PaxDb" id="9823-ENSSSCP00000012724"/>
<dbReference type="PeptideAtlas" id="Q9GKE8"/>
<dbReference type="Ensembl" id="ENSSSCT00030011212.1">
    <property type="protein sequence ID" value="ENSSSCP00030004990.1"/>
    <property type="gene ID" value="ENSSSCG00030008181.1"/>
</dbReference>
<dbReference type="Ensembl" id="ENSSSCT00050044579.1">
    <property type="protein sequence ID" value="ENSSSCP00050018332.1"/>
    <property type="gene ID" value="ENSSSCG00050033230.1"/>
</dbReference>
<dbReference type="Ensembl" id="ENSSSCT00060026025.1">
    <property type="protein sequence ID" value="ENSSSCP00060011021.1"/>
    <property type="gene ID" value="ENSSSCG00060019294.1"/>
</dbReference>
<dbReference type="Ensembl" id="ENSSSCT00065063226.1">
    <property type="protein sequence ID" value="ENSSSCP00065027375.1"/>
    <property type="gene ID" value="ENSSSCG00065046221.1"/>
</dbReference>
<dbReference type="Ensembl" id="ENSSSCT00110005407">
    <property type="protein sequence ID" value="ENSSSCP00110004108"/>
    <property type="gene ID" value="ENSSSCG00110002552"/>
</dbReference>
<dbReference type="Ensembl" id="ENSSSCT00115016874">
    <property type="protein sequence ID" value="ENSSSCP00115015930"/>
    <property type="gene ID" value="ENSSSCG00115008688"/>
</dbReference>
<dbReference type="GeneID" id="397042"/>
<dbReference type="KEGG" id="ssc:397042"/>
<dbReference type="CTD" id="961"/>
<dbReference type="eggNOG" id="ENOG502RYTQ">
    <property type="taxonomic scope" value="Eukaryota"/>
</dbReference>
<dbReference type="InParanoid" id="Q9GKE8"/>
<dbReference type="OrthoDB" id="9447188at2759"/>
<dbReference type="Reactome" id="R-SSC-202733">
    <property type="pathway name" value="Cell surface interactions at the vascular wall"/>
</dbReference>
<dbReference type="Reactome" id="R-SSC-216083">
    <property type="pathway name" value="Integrin cell surface interactions"/>
</dbReference>
<dbReference type="Reactome" id="R-SSC-391160">
    <property type="pathway name" value="Signal regulatory protein family interactions"/>
</dbReference>
<dbReference type="Reactome" id="R-SSC-6798695">
    <property type="pathway name" value="Neutrophil degranulation"/>
</dbReference>
<dbReference type="ChiTaRS" id="CD47">
    <property type="organism name" value="pig"/>
</dbReference>
<dbReference type="Proteomes" id="UP000008227">
    <property type="component" value="Unplaced"/>
</dbReference>
<dbReference type="Proteomes" id="UP000314985">
    <property type="component" value="Unplaced"/>
</dbReference>
<dbReference type="Proteomes" id="UP000694570">
    <property type="component" value="Unplaced"/>
</dbReference>
<dbReference type="Proteomes" id="UP000694571">
    <property type="component" value="Unplaced"/>
</dbReference>
<dbReference type="Proteomes" id="UP000694720">
    <property type="component" value="Unplaced"/>
</dbReference>
<dbReference type="Proteomes" id="UP000694722">
    <property type="component" value="Unplaced"/>
</dbReference>
<dbReference type="Proteomes" id="UP000694723">
    <property type="component" value="Unplaced"/>
</dbReference>
<dbReference type="Proteomes" id="UP000694724">
    <property type="component" value="Unplaced"/>
</dbReference>
<dbReference type="Proteomes" id="UP000694725">
    <property type="component" value="Unplaced"/>
</dbReference>
<dbReference type="Proteomes" id="UP000694726">
    <property type="component" value="Unplaced"/>
</dbReference>
<dbReference type="Proteomes" id="UP000694727">
    <property type="component" value="Unplaced"/>
</dbReference>
<dbReference type="Proteomes" id="UP000694728">
    <property type="component" value="Unplaced"/>
</dbReference>
<dbReference type="Bgee" id="ENSSSCG00000011942">
    <property type="expression patterns" value="Expressed in lung and 44 other cell types or tissues"/>
</dbReference>
<dbReference type="ExpressionAtlas" id="Q9GKE8">
    <property type="expression patterns" value="baseline and differential"/>
</dbReference>
<dbReference type="GO" id="GO:0070062">
    <property type="term" value="C:extracellular exosome"/>
    <property type="evidence" value="ECO:0000318"/>
    <property type="project" value="GO_Central"/>
</dbReference>
<dbReference type="GO" id="GO:0005886">
    <property type="term" value="C:plasma membrane"/>
    <property type="evidence" value="ECO:0000318"/>
    <property type="project" value="GO_Central"/>
</dbReference>
<dbReference type="GO" id="GO:0070053">
    <property type="term" value="F:thrombospondin receptor activity"/>
    <property type="evidence" value="ECO:0000318"/>
    <property type="project" value="GO_Central"/>
</dbReference>
<dbReference type="GO" id="GO:0007155">
    <property type="term" value="P:cell adhesion"/>
    <property type="evidence" value="ECO:0007669"/>
    <property type="project" value="UniProtKB-KW"/>
</dbReference>
<dbReference type="GO" id="GO:0022409">
    <property type="term" value="P:positive regulation of cell-cell adhesion"/>
    <property type="evidence" value="ECO:0000318"/>
    <property type="project" value="GO_Central"/>
</dbReference>
<dbReference type="GO" id="GO:0050729">
    <property type="term" value="P:positive regulation of inflammatory response"/>
    <property type="evidence" value="ECO:0000318"/>
    <property type="project" value="GO_Central"/>
</dbReference>
<dbReference type="GO" id="GO:0050766">
    <property type="term" value="P:positive regulation of phagocytosis"/>
    <property type="evidence" value="ECO:0000318"/>
    <property type="project" value="GO_Central"/>
</dbReference>
<dbReference type="CDD" id="cd16090">
    <property type="entry name" value="IgV_CD47"/>
    <property type="match status" value="1"/>
</dbReference>
<dbReference type="FunFam" id="2.60.40.10:FF:000521">
    <property type="entry name" value="leukocyte surface antigen CD47"/>
    <property type="match status" value="1"/>
</dbReference>
<dbReference type="Gene3D" id="2.60.40.10">
    <property type="entry name" value="Immunoglobulins"/>
    <property type="match status" value="1"/>
</dbReference>
<dbReference type="InterPro" id="IPR006704">
    <property type="entry name" value="CD47"/>
</dbReference>
<dbReference type="InterPro" id="IPR013147">
    <property type="entry name" value="CD47-like_TM"/>
</dbReference>
<dbReference type="InterPro" id="IPR013270">
    <property type="entry name" value="CD47_Vset"/>
</dbReference>
<dbReference type="InterPro" id="IPR007110">
    <property type="entry name" value="Ig-like_dom"/>
</dbReference>
<dbReference type="InterPro" id="IPR013783">
    <property type="entry name" value="Ig-like_fold"/>
</dbReference>
<dbReference type="InterPro" id="IPR037805">
    <property type="entry name" value="IgV_CD47"/>
</dbReference>
<dbReference type="PANTHER" id="PTHR10613">
    <property type="entry name" value="LEUKOCYTE SURFACE ANTIGEN CD47"/>
    <property type="match status" value="1"/>
</dbReference>
<dbReference type="PANTHER" id="PTHR10613:SF0">
    <property type="entry name" value="LEUKOCYTE SURFACE ANTIGEN CD47"/>
    <property type="match status" value="1"/>
</dbReference>
<dbReference type="Pfam" id="PF04549">
    <property type="entry name" value="CD47"/>
    <property type="match status" value="1"/>
</dbReference>
<dbReference type="Pfam" id="PF08204">
    <property type="entry name" value="V-set_CD47"/>
    <property type="match status" value="1"/>
</dbReference>
<dbReference type="PROSITE" id="PS50835">
    <property type="entry name" value="IG_LIKE"/>
    <property type="match status" value="1"/>
</dbReference>
<gene>
    <name type="primary">CD47</name>
</gene>
<organism>
    <name type="scientific">Sus scrofa</name>
    <name type="common">Pig</name>
    <dbReference type="NCBI Taxonomy" id="9823"/>
    <lineage>
        <taxon>Eukaryota</taxon>
        <taxon>Metazoa</taxon>
        <taxon>Chordata</taxon>
        <taxon>Craniata</taxon>
        <taxon>Vertebrata</taxon>
        <taxon>Euteleostomi</taxon>
        <taxon>Mammalia</taxon>
        <taxon>Eutheria</taxon>
        <taxon>Laurasiatheria</taxon>
        <taxon>Artiodactyla</taxon>
        <taxon>Suina</taxon>
        <taxon>Suidae</taxon>
        <taxon>Sus</taxon>
    </lineage>
</organism>
<keyword id="KW-0130">Cell adhesion</keyword>
<keyword id="KW-1003">Cell membrane</keyword>
<keyword id="KW-1015">Disulfide bond</keyword>
<keyword id="KW-0325">Glycoprotein</keyword>
<keyword id="KW-0393">Immunoglobulin domain</keyword>
<keyword id="KW-0472">Membrane</keyword>
<keyword id="KW-0597">Phosphoprotein</keyword>
<keyword id="KW-0873">Pyrrolidone carboxylic acid</keyword>
<keyword id="KW-1185">Reference proteome</keyword>
<keyword id="KW-0732">Signal</keyword>
<keyword id="KW-0812">Transmembrane</keyword>
<keyword id="KW-1133">Transmembrane helix</keyword>
<sequence length="303" mass="33253">MWPLVVVVLLGSAYCGSAQLIFNITKSVEFTVCNTTVTIPCFVNNMEAKNISELYVKWKFKGKDIFIFDGAQHISKPSEAFPSSKISPSELLHGIASLKMDKRDAVIGNYTCEVTELSREGETIIELKRRFVSWFSPNENILIVIFPILAILLFWGQFGILTLKYKSSYTKEKTIFLLVAGLMLTIIVIVGAILFIPGEYSTKNACGLGLIVIPTAILILLQYCVFMMALGMSSFTIAILILQVLGHVLSVVGLSLCVSECTPVHGPLLISGLGIIALAELLGLVYMKCVASDHKTIQPPRNN</sequence>
<name>CD47_PIG</name>
<proteinExistence type="evidence at protein level"/>